<organism>
    <name type="scientific">Rattus norvegicus</name>
    <name type="common">Rat</name>
    <dbReference type="NCBI Taxonomy" id="10116"/>
    <lineage>
        <taxon>Eukaryota</taxon>
        <taxon>Metazoa</taxon>
        <taxon>Chordata</taxon>
        <taxon>Craniata</taxon>
        <taxon>Vertebrata</taxon>
        <taxon>Euteleostomi</taxon>
        <taxon>Mammalia</taxon>
        <taxon>Eutheria</taxon>
        <taxon>Euarchontoglires</taxon>
        <taxon>Glires</taxon>
        <taxon>Rodentia</taxon>
        <taxon>Myomorpha</taxon>
        <taxon>Muroidea</taxon>
        <taxon>Muridae</taxon>
        <taxon>Murinae</taxon>
        <taxon>Rattus</taxon>
    </lineage>
</organism>
<dbReference type="EC" id="3.6.4.13"/>
<dbReference type="EMBL" id="M75168">
    <property type="protein sequence ID" value="AAA41787.1"/>
    <property type="status" value="ALT_FRAME"/>
    <property type="molecule type" value="mRNA"/>
</dbReference>
<dbReference type="EMBL" id="AF387339">
    <property type="protein sequence ID" value="AAL98920.1"/>
    <property type="molecule type" value="Genomic_DNA"/>
</dbReference>
<dbReference type="EMBL" id="AJ314857">
    <property type="protein sequence ID" value="CAC85694.1"/>
    <property type="molecule type" value="Genomic_DNA"/>
</dbReference>
<dbReference type="EMBL" id="BC080243">
    <property type="protein sequence ID" value="AAH80243.1"/>
    <property type="molecule type" value="mRNA"/>
</dbReference>
<dbReference type="PIR" id="A42811">
    <property type="entry name" value="A42811"/>
</dbReference>
<dbReference type="RefSeq" id="NP_579834.2">
    <property type="nucleotide sequence ID" value="NM_133300.3"/>
</dbReference>
<dbReference type="RefSeq" id="XP_063134999.1">
    <property type="nucleotide sequence ID" value="XM_063278929.1"/>
</dbReference>
<dbReference type="SMR" id="Q63413"/>
<dbReference type="BioGRID" id="250392">
    <property type="interactions" value="1"/>
</dbReference>
<dbReference type="FunCoup" id="Q63413">
    <property type="interactions" value="4244"/>
</dbReference>
<dbReference type="IntAct" id="Q63413">
    <property type="interactions" value="1"/>
</dbReference>
<dbReference type="STRING" id="10116.ENSRNOP00000001115"/>
<dbReference type="iPTMnet" id="Q63413"/>
<dbReference type="PhosphoSitePlus" id="Q63413"/>
<dbReference type="jPOST" id="Q63413"/>
<dbReference type="PaxDb" id="10116-ENSRNOP00000001115"/>
<dbReference type="Ensembl" id="ENSRNOT00000001115.7">
    <property type="protein sequence ID" value="ENSRNOP00000001115.4"/>
    <property type="gene ID" value="ENSRNOG00000000841.8"/>
</dbReference>
<dbReference type="GeneID" id="114612"/>
<dbReference type="KEGG" id="rno:114612"/>
<dbReference type="UCSC" id="RGD:70923">
    <property type="organism name" value="rat"/>
</dbReference>
<dbReference type="AGR" id="RGD:70923"/>
<dbReference type="CTD" id="7919"/>
<dbReference type="RGD" id="70923">
    <property type="gene designation" value="Ddx39b"/>
</dbReference>
<dbReference type="eggNOG" id="KOG0329">
    <property type="taxonomic scope" value="Eukaryota"/>
</dbReference>
<dbReference type="GeneTree" id="ENSGT00940000160110"/>
<dbReference type="HOGENOM" id="CLU_003041_1_0_1"/>
<dbReference type="InParanoid" id="Q63413"/>
<dbReference type="OrthoDB" id="9088at9989"/>
<dbReference type="PhylomeDB" id="Q63413"/>
<dbReference type="TreeFam" id="TF300442"/>
<dbReference type="Reactome" id="R-RNO-159236">
    <property type="pathway name" value="Transport of Mature mRNA derived from an Intron-Containing Transcript"/>
</dbReference>
<dbReference type="Reactome" id="R-RNO-72163">
    <property type="pathway name" value="mRNA Splicing - Major Pathway"/>
</dbReference>
<dbReference type="Reactome" id="R-RNO-72187">
    <property type="pathway name" value="mRNA 3'-end processing"/>
</dbReference>
<dbReference type="Reactome" id="R-RNO-73856">
    <property type="pathway name" value="RNA Polymerase II Transcription Termination"/>
</dbReference>
<dbReference type="Reactome" id="R-RNO-9013418">
    <property type="pathway name" value="RHOBTB2 GTPase cycle"/>
</dbReference>
<dbReference type="PRO" id="PR:Q63413"/>
<dbReference type="Proteomes" id="UP000002494">
    <property type="component" value="Chromosome 20"/>
</dbReference>
<dbReference type="Bgee" id="ENSRNOG00000000841">
    <property type="expression patterns" value="Expressed in thymus and 20 other cell types or tissues"/>
</dbReference>
<dbReference type="ExpressionAtlas" id="Q63413">
    <property type="expression patterns" value="baseline and differential"/>
</dbReference>
<dbReference type="GO" id="GO:0005737">
    <property type="term" value="C:cytoplasm"/>
    <property type="evidence" value="ECO:0000266"/>
    <property type="project" value="RGD"/>
</dbReference>
<dbReference type="GO" id="GO:0016363">
    <property type="term" value="C:nuclear matrix"/>
    <property type="evidence" value="ECO:0000314"/>
    <property type="project" value="RGD"/>
</dbReference>
<dbReference type="GO" id="GO:0016607">
    <property type="term" value="C:nuclear speck"/>
    <property type="evidence" value="ECO:0000266"/>
    <property type="project" value="RGD"/>
</dbReference>
<dbReference type="GO" id="GO:0005634">
    <property type="term" value="C:nucleus"/>
    <property type="evidence" value="ECO:0000266"/>
    <property type="project" value="RGD"/>
</dbReference>
<dbReference type="GO" id="GO:0032991">
    <property type="term" value="C:protein-containing complex"/>
    <property type="evidence" value="ECO:0000314"/>
    <property type="project" value="RGD"/>
</dbReference>
<dbReference type="GO" id="GO:0005681">
    <property type="term" value="C:spliceosomal complex"/>
    <property type="evidence" value="ECO:0000266"/>
    <property type="project" value="RGD"/>
</dbReference>
<dbReference type="GO" id="GO:0000346">
    <property type="term" value="C:transcription export complex"/>
    <property type="evidence" value="ECO:0000266"/>
    <property type="project" value="RGD"/>
</dbReference>
<dbReference type="GO" id="GO:0005687">
    <property type="term" value="C:U4 snRNP"/>
    <property type="evidence" value="ECO:0000266"/>
    <property type="project" value="RGD"/>
</dbReference>
<dbReference type="GO" id="GO:0005688">
    <property type="term" value="C:U6 snRNP"/>
    <property type="evidence" value="ECO:0000266"/>
    <property type="project" value="RGD"/>
</dbReference>
<dbReference type="GO" id="GO:0005524">
    <property type="term" value="F:ATP binding"/>
    <property type="evidence" value="ECO:0007669"/>
    <property type="project" value="UniProtKB-KW"/>
</dbReference>
<dbReference type="GO" id="GO:0016887">
    <property type="term" value="F:ATP hydrolysis activity"/>
    <property type="evidence" value="ECO:0000266"/>
    <property type="project" value="RGD"/>
</dbReference>
<dbReference type="GO" id="GO:0008186">
    <property type="term" value="F:ATP-dependent activity, acting on RNA"/>
    <property type="evidence" value="ECO:0000266"/>
    <property type="project" value="RGD"/>
</dbReference>
<dbReference type="GO" id="GO:0043008">
    <property type="term" value="F:ATP-dependent protein binding"/>
    <property type="evidence" value="ECO:0000266"/>
    <property type="project" value="RGD"/>
</dbReference>
<dbReference type="GO" id="GO:0042802">
    <property type="term" value="F:identical protein binding"/>
    <property type="evidence" value="ECO:0000266"/>
    <property type="project" value="RGD"/>
</dbReference>
<dbReference type="GO" id="GO:0003729">
    <property type="term" value="F:mRNA binding"/>
    <property type="evidence" value="ECO:0000318"/>
    <property type="project" value="GO_Central"/>
</dbReference>
<dbReference type="GO" id="GO:0044877">
    <property type="term" value="F:protein-containing complex binding"/>
    <property type="evidence" value="ECO:0000314"/>
    <property type="project" value="RGD"/>
</dbReference>
<dbReference type="GO" id="GO:0003724">
    <property type="term" value="F:RNA helicase activity"/>
    <property type="evidence" value="ECO:0000266"/>
    <property type="project" value="RGD"/>
</dbReference>
<dbReference type="GO" id="GO:0030621">
    <property type="term" value="F:U4 snRNA binding"/>
    <property type="evidence" value="ECO:0000266"/>
    <property type="project" value="RGD"/>
</dbReference>
<dbReference type="GO" id="GO:0017070">
    <property type="term" value="F:U6 snRNA binding"/>
    <property type="evidence" value="ECO:0000266"/>
    <property type="project" value="RGD"/>
</dbReference>
<dbReference type="GO" id="GO:0001889">
    <property type="term" value="P:liver development"/>
    <property type="evidence" value="ECO:0000270"/>
    <property type="project" value="RGD"/>
</dbReference>
<dbReference type="GO" id="GO:0006406">
    <property type="term" value="P:mRNA export from nucleus"/>
    <property type="evidence" value="ECO:0000266"/>
    <property type="project" value="RGD"/>
</dbReference>
<dbReference type="GO" id="GO:0000398">
    <property type="term" value="P:mRNA splicing, via spliceosome"/>
    <property type="evidence" value="ECO:0000266"/>
    <property type="project" value="RGD"/>
</dbReference>
<dbReference type="GO" id="GO:0061051">
    <property type="term" value="P:positive regulation of cell growth involved in cardiac muscle cell development"/>
    <property type="evidence" value="ECO:0000315"/>
    <property type="project" value="RGD"/>
</dbReference>
<dbReference type="GO" id="GO:2000573">
    <property type="term" value="P:positive regulation of DNA biosynthetic process"/>
    <property type="evidence" value="ECO:0000315"/>
    <property type="project" value="RGD"/>
</dbReference>
<dbReference type="GO" id="GO:0045727">
    <property type="term" value="P:positive regulation of translation"/>
    <property type="evidence" value="ECO:0000315"/>
    <property type="project" value="RGD"/>
</dbReference>
<dbReference type="GO" id="GO:1904707">
    <property type="term" value="P:positive regulation of vascular associated smooth muscle cell proliferation"/>
    <property type="evidence" value="ECO:0000315"/>
    <property type="project" value="RGD"/>
</dbReference>
<dbReference type="GO" id="GO:0008380">
    <property type="term" value="P:RNA splicing"/>
    <property type="evidence" value="ECO:0000266"/>
    <property type="project" value="RGD"/>
</dbReference>
<dbReference type="GO" id="GO:0000245">
    <property type="term" value="P:spliceosomal complex assembly"/>
    <property type="evidence" value="ECO:0000266"/>
    <property type="project" value="RGD"/>
</dbReference>
<dbReference type="CDD" id="cd17950">
    <property type="entry name" value="DEADc_DDX39"/>
    <property type="match status" value="1"/>
</dbReference>
<dbReference type="CDD" id="cd18787">
    <property type="entry name" value="SF2_C_DEAD"/>
    <property type="match status" value="1"/>
</dbReference>
<dbReference type="FunFam" id="3.40.50.300:FF:000111">
    <property type="entry name" value="DEAD-box ATP-dependent RNA helicase"/>
    <property type="match status" value="1"/>
</dbReference>
<dbReference type="FunFam" id="3.40.50.300:FF:000168">
    <property type="entry name" value="DEAD-box ATP-dependent RNA helicase 56-like"/>
    <property type="match status" value="1"/>
</dbReference>
<dbReference type="Gene3D" id="3.40.50.300">
    <property type="entry name" value="P-loop containing nucleotide triphosphate hydrolases"/>
    <property type="match status" value="2"/>
</dbReference>
<dbReference type="InterPro" id="IPR011545">
    <property type="entry name" value="DEAD/DEAH_box_helicase_dom"/>
</dbReference>
<dbReference type="InterPro" id="IPR014001">
    <property type="entry name" value="Helicase_ATP-bd"/>
</dbReference>
<dbReference type="InterPro" id="IPR001650">
    <property type="entry name" value="Helicase_C-like"/>
</dbReference>
<dbReference type="InterPro" id="IPR027417">
    <property type="entry name" value="P-loop_NTPase"/>
</dbReference>
<dbReference type="InterPro" id="IPR014014">
    <property type="entry name" value="RNA_helicase_DEAD_Q_motif"/>
</dbReference>
<dbReference type="PANTHER" id="PTHR47958">
    <property type="entry name" value="ATP-DEPENDENT RNA HELICASE DBP3"/>
    <property type="match status" value="1"/>
</dbReference>
<dbReference type="Pfam" id="PF00270">
    <property type="entry name" value="DEAD"/>
    <property type="match status" value="1"/>
</dbReference>
<dbReference type="Pfam" id="PF00271">
    <property type="entry name" value="Helicase_C"/>
    <property type="match status" value="1"/>
</dbReference>
<dbReference type="SMART" id="SM00487">
    <property type="entry name" value="DEXDc"/>
    <property type="match status" value="1"/>
</dbReference>
<dbReference type="SMART" id="SM00490">
    <property type="entry name" value="HELICc"/>
    <property type="match status" value="1"/>
</dbReference>
<dbReference type="SUPFAM" id="SSF52540">
    <property type="entry name" value="P-loop containing nucleoside triphosphate hydrolases"/>
    <property type="match status" value="1"/>
</dbReference>
<dbReference type="PROSITE" id="PS51192">
    <property type="entry name" value="HELICASE_ATP_BIND_1"/>
    <property type="match status" value="1"/>
</dbReference>
<dbReference type="PROSITE" id="PS51194">
    <property type="entry name" value="HELICASE_CTER"/>
    <property type="match status" value="1"/>
</dbReference>
<dbReference type="PROSITE" id="PS51195">
    <property type="entry name" value="Q_MOTIF"/>
    <property type="match status" value="1"/>
</dbReference>
<name>DX39B_RAT</name>
<reference key="1">
    <citation type="journal article" date="1992" name="J. Biol. Chem.">
        <title>Molecular cloning and analysis of an eIF-4A-related rat liver nuclear protein.</title>
        <authorList>
            <person name="Nair S."/>
            <person name="Dey R."/>
            <person name="Sanford J.P."/>
            <person name="Doyle D."/>
        </authorList>
    </citation>
    <scope>NUCLEOTIDE SEQUENCE [MRNA]</scope>
</reference>
<reference key="2">
    <citation type="journal article" date="2002" name="Immunogenetics">
        <title>Does the rat have an H2-D orthologue next to Bat1?</title>
        <authorList>
            <person name="Lambracht-Washington D."/>
            <person name="Fischer Lindahl K."/>
        </authorList>
    </citation>
    <scope>NUCLEOTIDE SEQUENCE [GENOMIC DNA]</scope>
    <source>
        <strain>Lewis</strain>
    </source>
</reference>
<reference key="3">
    <citation type="submission" date="2001-06" db="EMBL/GenBank/DDBJ databases">
        <title>Sequence analysis of the rat MHC class I region.</title>
        <authorList>
            <person name="Walter L."/>
        </authorList>
    </citation>
    <scope>NUCLEOTIDE SEQUENCE [GENOMIC DNA]</scope>
    <source>
        <strain>Brown Norway</strain>
    </source>
</reference>
<reference key="4">
    <citation type="journal article" date="2004" name="Genome Res.">
        <title>The status, quality, and expansion of the NIH full-length cDNA project: the Mammalian Gene Collection (MGC).</title>
        <authorList>
            <consortium name="The MGC Project Team"/>
        </authorList>
    </citation>
    <scope>NUCLEOTIDE SEQUENCE [LARGE SCALE MRNA]</scope>
    <source>
        <tissue>Lung</tissue>
    </source>
</reference>
<gene>
    <name type="primary">Ddx39b</name>
    <name type="synonym">Bat1</name>
    <name type="synonym">Bat1a</name>
    <name type="synonym">Uap56</name>
</gene>
<keyword id="KW-0007">Acetylation</keyword>
<keyword id="KW-0067">ATP-binding</keyword>
<keyword id="KW-0963">Cytoplasm</keyword>
<keyword id="KW-0347">Helicase</keyword>
<keyword id="KW-0378">Hydrolase</keyword>
<keyword id="KW-1017">Isopeptide bond</keyword>
<keyword id="KW-0507">mRNA processing</keyword>
<keyword id="KW-0508">mRNA splicing</keyword>
<keyword id="KW-0509">mRNA transport</keyword>
<keyword id="KW-0547">Nucleotide-binding</keyword>
<keyword id="KW-0539">Nucleus</keyword>
<keyword id="KW-0597">Phosphoprotein</keyword>
<keyword id="KW-1185">Reference proteome</keyword>
<keyword id="KW-0694">RNA-binding</keyword>
<keyword id="KW-0747">Spliceosome</keyword>
<keyword id="KW-0813">Transport</keyword>
<keyword id="KW-0832">Ubl conjugation</keyword>
<accession>Q63413</accession>
<accession>Q811A6</accession>
<accession>Q8R2G9</accession>
<evidence type="ECO:0000250" key="1"/>
<evidence type="ECO:0000250" key="2">
    <source>
        <dbReference type="UniProtKB" id="Q13838"/>
    </source>
</evidence>
<evidence type="ECO:0000255" key="3">
    <source>
        <dbReference type="PROSITE-ProRule" id="PRU00541"/>
    </source>
</evidence>
<evidence type="ECO:0000255" key="4">
    <source>
        <dbReference type="PROSITE-ProRule" id="PRU00542"/>
    </source>
</evidence>
<evidence type="ECO:0000256" key="5">
    <source>
        <dbReference type="SAM" id="MobiDB-lite"/>
    </source>
</evidence>
<evidence type="ECO:0000305" key="6"/>
<proteinExistence type="evidence at transcript level"/>
<feature type="initiator methionine" description="Removed" evidence="2">
    <location>
        <position position="1"/>
    </location>
</feature>
<feature type="chain" id="PRO_0000055077" description="Spliceosome RNA helicase Ddx39b">
    <location>
        <begin position="2"/>
        <end position="428"/>
    </location>
</feature>
<feature type="domain" description="Helicase ATP-binding" evidence="3">
    <location>
        <begin position="76"/>
        <end position="249"/>
    </location>
</feature>
<feature type="domain" description="Helicase C-terminal" evidence="4">
    <location>
        <begin position="261"/>
        <end position="422"/>
    </location>
</feature>
<feature type="region of interest" description="Disordered" evidence="5">
    <location>
        <begin position="1"/>
        <end position="31"/>
    </location>
</feature>
<feature type="short sequence motif" description="Q motif">
    <location>
        <begin position="45"/>
        <end position="73"/>
    </location>
</feature>
<feature type="short sequence motif" description="DECD box">
    <location>
        <begin position="196"/>
        <end position="199"/>
    </location>
</feature>
<feature type="compositionally biased region" description="Acidic residues" evidence="5">
    <location>
        <begin position="1"/>
        <end position="19"/>
    </location>
</feature>
<feature type="binding site" evidence="3">
    <location>
        <begin position="89"/>
        <end position="96"/>
    </location>
    <ligand>
        <name>ATP</name>
        <dbReference type="ChEBI" id="CHEBI:30616"/>
    </ligand>
</feature>
<feature type="modified residue" description="N-acetylalanine" evidence="2">
    <location>
        <position position="2"/>
    </location>
</feature>
<feature type="modified residue" description="N6-acetyllysine; alternate" evidence="2">
    <location>
        <position position="36"/>
    </location>
</feature>
<feature type="modified residue" description="Phosphoserine" evidence="2">
    <location>
        <position position="38"/>
    </location>
</feature>
<feature type="modified residue" description="Phosphoserine" evidence="2">
    <location>
        <position position="41"/>
    </location>
</feature>
<feature type="modified residue" description="Phosphothreonine" evidence="2">
    <location>
        <position position="172"/>
    </location>
</feature>
<feature type="cross-link" description="Glycyl lysine isopeptide (Lys-Gly) (interchain with G-Cter in SUMO2); alternate" evidence="2">
    <location>
        <position position="36"/>
    </location>
</feature>
<feature type="sequence conflict" description="In Ref. 2; AAL98920." evidence="6" ref="2">
    <original>R</original>
    <variation>P</variation>
    <location>
        <position position="236"/>
    </location>
</feature>
<feature type="sequence conflict" description="In Ref. 2; AAL98920." evidence="6" ref="2">
    <original>E</original>
    <variation>Q</variation>
    <location>
        <position position="286"/>
    </location>
</feature>
<feature type="sequence conflict" description="In Ref. 1; AAA41787." evidence="6" ref="1">
    <original>F</original>
    <variation>L</variation>
    <location>
        <position position="312"/>
    </location>
</feature>
<feature type="sequence conflict" description="In Ref. 1; AAA41787." evidence="6" ref="1">
    <original>E</original>
    <variation>V</variation>
    <location>
        <position position="354"/>
    </location>
</feature>
<protein>
    <recommendedName>
        <fullName>Spliceosome RNA helicase Ddx39b</fullName>
        <ecNumber>3.6.4.13</ecNumber>
    </recommendedName>
    <alternativeName>
        <fullName>56 kDa U2AF65-associated protein</fullName>
    </alternativeName>
    <alternativeName>
        <fullName>ATP-dependent RNA helicase p47</fullName>
    </alternativeName>
    <alternativeName>
        <fullName>DEAD box protein Uap56</fullName>
    </alternativeName>
</protein>
<sequence>MAENDVDNELLDYEDDEVETAAGADGTEAPAKKDVKGSYVSIHSSGFRDFLLKPELLRAIVDCGFEHPSEVQHECIPQAILGMDVLCQAKSGMGKTAVFVLATLQQLEPVTGQVSVLVMCHTRELAFQISKEYERFSKYMPNVKVAVFFGGLSIKKDEEVLKKNCPHIVVGTPGRILALARNKSLNLKHIKHFILDECDKMLEQLDMRRDVQEIFRMTPHEKQVMMFSATLSKEIRPVCRKFMQDPMEIFVDDETKLTLHGLQQYYVKLKDNEKNRKLFDLLDVLEFNQVVIFVKSVQRCIALAQLLVEQNFPAIAIHRGMPQEERLSRYQQFKDFQRRILVATNLFGRGMDIERVNIAFNYDMPEDSDTYLHRVARAGRFGTKGLAITFVSDENDAKILNDVQDRFEVNISELPDEIDISSYIEQTR</sequence>
<comment type="function">
    <text evidence="2">Involved in nuclear export of spliced and unspliced mRNA. Component of the TREX complex which is thought to couple mRNA transcription, processing and nuclear export, and specifically associates with spliced mRNA and not with unspliced pre-mRNA. The TREX complex is recruited to spliced mRNAs by a transcription-independent mechanism, binds to mRNA upstream of the exon-junction complex (EJC) and is recruited in a splicing- and cap-dependent manner to a region near the 5' end of the mRNA where it functions in mRNA export to the cytoplasm via the TAP/NXF1 pathway. The THOC1-THOC2-THOC3 core complex alone is sufficient to promote ATPase activity of DDX39B; in the complex THOC2 is the only component that directly interacts with DDX39B. Associates with SARNP/CIP29, which facilitates RNA binding of DDX39B and likely plays a role in mRNA export. May undergo several rounds of ATP hydrolysis during assembly of TREX to drive subsequent loading of components such as ALYREF/THOC4 and CHTOP onto mRNA. Also associates with pre-mRNA independent of ALYREF/THOC4. Involved in the nuclear export of intronless mRNA; the ATP-bound form is proposed to recruit export adapter ALYREF/THOC4 to intronless mRNA; its ATPase activity is cooperatively stimulated by RNA and ALYREF/THOC4 and ATP hydrolysis is thought to trigger the dissociation from RNA to allow the association of ALYREF/THOC4 and the NXF1-NXT1 heterodimer. Involved in transcription elongation and genome stability.</text>
</comment>
<comment type="function">
    <text evidence="2">Splice factor that is required for the first ATP-dependent step in spliceosome assembly and for the interaction of U2 snRNP with the branchpoint. Has both RNA-stimulated ATP binding/hydrolysis activity and ATP-dependent RNA unwinding activity. Even with the stimulation of RNA, the ATPase activity is weak. Can only hydrolyze ATP but not other NTPs. The RNA stimulation of ATPase activity does not have a strong preference for the sequence and length of the RNA. However, ssRNA stimulates the ATPase activity much more strongly than dsRNA. Can unwind 5' or 3' overhangs or blunt end RNA duplexes in vitro. The ATPase and helicase activities are not influenced by U2AF2; the effect of ALYREF/THOC4 is reported conflictingly.</text>
</comment>
<comment type="catalytic activity">
    <reaction evidence="2">
        <text>ATP + H2O = ADP + phosphate + H(+)</text>
        <dbReference type="Rhea" id="RHEA:13065"/>
        <dbReference type="ChEBI" id="CHEBI:15377"/>
        <dbReference type="ChEBI" id="CHEBI:15378"/>
        <dbReference type="ChEBI" id="CHEBI:30616"/>
        <dbReference type="ChEBI" id="CHEBI:43474"/>
        <dbReference type="ChEBI" id="CHEBI:456216"/>
        <dbReference type="EC" id="3.6.4.13"/>
    </reaction>
</comment>
<comment type="subunit">
    <text evidence="2">Homodimer, and heterodimer with DDX39A. DDX39B interacts with the THO subcomplex to form the THO-DDX39B complex which multimerizes into a 28-subunit tetrameric assembly. Component of the transcription/export (TREX) complex at least composed of ALYREF/THOC4, DDX39B, SARNP/CIP29, CHTOP and the THO subcomplex; in the complex interacts with THOC2. THOC1-THOC2-THOC3-DDX39B subcomplex is sufficient for the interaction with export factor NXF1-NXT1. TREX seems to have a dynamic structure involving ATP-dependent remodeling. Within the TREX complex bridges ALYREF/THOC4 and the THO subcomplex, and, in a ATP-dependent manner, ALYREF/THOC4 and SARNP/CIP29. Component of the spliceosome. Interacts directly with U2AF2. Interacts with RBM8A, RNPS1 and SRRM1, FYTTD1/UIF, THOC1, MX1 and POLDIP3. Interacts with LUZP4. Interacts with SARNP/CIP29 (via the C-terminal domain); the interaction is direct and facilitates RNA binding of DDX39B.</text>
</comment>
<comment type="subcellular location">
    <subcellularLocation>
        <location>Nucleus</location>
    </subcellularLocation>
    <subcellularLocation>
        <location evidence="1">Nucleus speckle</location>
    </subcellularLocation>
    <subcellularLocation>
        <location evidence="1">Cytoplasm</location>
    </subcellularLocation>
    <text evidence="1">Can translocate to the cytoplasm in the presence of MX1.</text>
</comment>
<comment type="tissue specificity">
    <text>Highly expressed in liver.</text>
</comment>
<comment type="domain">
    <text evidence="1">The helicase C-terminal domain mediates interaction with ALYREF/THOC4.</text>
</comment>
<comment type="similarity">
    <text evidence="6">Belongs to the DEAD box helicase family. DECD subfamily.</text>
</comment>
<comment type="sequence caution" evidence="6">
    <conflict type="frameshift">
        <sequence resource="EMBL-CDS" id="AAA41787"/>
    </conflict>
</comment>